<proteinExistence type="inferred from homology"/>
<organism>
    <name type="scientific">Protochlamydia amoebophila (strain UWE25)</name>
    <dbReference type="NCBI Taxonomy" id="264201"/>
    <lineage>
        <taxon>Bacteria</taxon>
        <taxon>Pseudomonadati</taxon>
        <taxon>Chlamydiota</taxon>
        <taxon>Chlamydiia</taxon>
        <taxon>Parachlamydiales</taxon>
        <taxon>Parachlamydiaceae</taxon>
        <taxon>Candidatus Protochlamydia</taxon>
    </lineage>
</organism>
<sequence>MVQKKYCEAIHQTERRPTRIVNVGNVGIGGNHPIRIQSMTTSSTRDVEATIEQVIRLADQGCEIVRVTVQGIKEADACEHIKKGLIKRGYQIPLVADIHFYPPAAMRVVDFVDKVRINPGNFVDKRASFKQIVYDDESYAREIERIEEKFTPLVEKCKRLNRAMRIGTNHGSLSDRIMNRYGDTPFGMVESALEFARICRKNDYHNFLFSMKASNPQVMIQAYRLLTQAMYALEWDYPLHLGVTEAGEGEDGRIKSAMGIGSLLIDGIGDTIRVSLTEDPWHEINPCQRLIKLASAYQQQGVAPFIENYRQIEAIERRQVHLSSTVPMHRDGTVFISLPINMLKEASLYQQIGCEGPFGKPKLKTATADNLVLKNPNSDSEEKRQLQILKDLGIGLFSKDPFEMSLVIHPLKKWLQSRAVDSFASRFSSSWAKSAGQPLIIQITDETEKEWKEVISLKPQLIILSPSTNRLHYSRQFFEWLQQNQLNYPVILNFTYQGENEDTILLASMECGSLLCDGLGEGVWLEGPYDILFLRQLSFSILQAARLRMSKTDFISCPSCGRTLFNLQDVTKRIQSRTSHLPGVKIAIMGCIVNGPGEMADADFGYVGSKPGKIDLYVGKECVEKDIDFADADDRLVNLIRAHGRWIEPQTVNA</sequence>
<keyword id="KW-0004">4Fe-4S</keyword>
<keyword id="KW-0408">Iron</keyword>
<keyword id="KW-0411">Iron-sulfur</keyword>
<keyword id="KW-0414">Isoprene biosynthesis</keyword>
<keyword id="KW-0479">Metal-binding</keyword>
<keyword id="KW-0560">Oxidoreductase</keyword>
<keyword id="KW-1185">Reference proteome</keyword>
<protein>
    <recommendedName>
        <fullName evidence="1">4-hydroxy-3-methylbut-2-en-1-yl diphosphate synthase (flavodoxin)</fullName>
        <ecNumber evidence="1">1.17.7.3</ecNumber>
    </recommendedName>
    <alternativeName>
        <fullName evidence="1">1-hydroxy-2-methyl-2-(E)-butenyl 4-diphosphate synthase</fullName>
    </alternativeName>
</protein>
<reference key="1">
    <citation type="journal article" date="2004" name="Science">
        <title>Illuminating the evolutionary history of chlamydiae.</title>
        <authorList>
            <person name="Horn M."/>
            <person name="Collingro A."/>
            <person name="Schmitz-Esser S."/>
            <person name="Beier C.L."/>
            <person name="Purkhold U."/>
            <person name="Fartmann B."/>
            <person name="Brandt P."/>
            <person name="Nyakatura G.J."/>
            <person name="Droege M."/>
            <person name="Frishman D."/>
            <person name="Rattei T."/>
            <person name="Mewes H.-W."/>
            <person name="Wagner M."/>
        </authorList>
    </citation>
    <scope>NUCLEOTIDE SEQUENCE [LARGE SCALE GENOMIC DNA]</scope>
    <source>
        <strain>UWE25</strain>
    </source>
</reference>
<accession>Q6MD85</accession>
<name>ISPG_PARUW</name>
<gene>
    <name evidence="1" type="primary">ispG</name>
    <name type="synonym">gcpE</name>
    <name type="ordered locus">pc0740</name>
</gene>
<evidence type="ECO:0000255" key="1">
    <source>
        <dbReference type="HAMAP-Rule" id="MF_00159"/>
    </source>
</evidence>
<comment type="function">
    <text evidence="1">Converts 2C-methyl-D-erythritol 2,4-cyclodiphosphate (ME-2,4cPP) into 1-hydroxy-2-methyl-2-(E)-butenyl 4-diphosphate.</text>
</comment>
<comment type="catalytic activity">
    <reaction evidence="1">
        <text>(2E)-4-hydroxy-3-methylbut-2-enyl diphosphate + oxidized [flavodoxin] + H2O + 2 H(+) = 2-C-methyl-D-erythritol 2,4-cyclic diphosphate + reduced [flavodoxin]</text>
        <dbReference type="Rhea" id="RHEA:43604"/>
        <dbReference type="Rhea" id="RHEA-COMP:10622"/>
        <dbReference type="Rhea" id="RHEA-COMP:10623"/>
        <dbReference type="ChEBI" id="CHEBI:15377"/>
        <dbReference type="ChEBI" id="CHEBI:15378"/>
        <dbReference type="ChEBI" id="CHEBI:57618"/>
        <dbReference type="ChEBI" id="CHEBI:58210"/>
        <dbReference type="ChEBI" id="CHEBI:58483"/>
        <dbReference type="ChEBI" id="CHEBI:128753"/>
        <dbReference type="EC" id="1.17.7.3"/>
    </reaction>
</comment>
<comment type="cofactor">
    <cofactor evidence="1">
        <name>[4Fe-4S] cluster</name>
        <dbReference type="ChEBI" id="CHEBI:49883"/>
    </cofactor>
    <text evidence="1">Binds 1 [4Fe-4S] cluster.</text>
</comment>
<comment type="pathway">
    <text evidence="1">Isoprenoid biosynthesis; isopentenyl diphosphate biosynthesis via DXP pathway; isopentenyl diphosphate from 1-deoxy-D-xylulose 5-phosphate: step 5/6.</text>
</comment>
<comment type="similarity">
    <text evidence="1">Belongs to the IspG family.</text>
</comment>
<feature type="chain" id="PRO_0000190608" description="4-hydroxy-3-methylbut-2-en-1-yl diphosphate synthase (flavodoxin)">
    <location>
        <begin position="1"/>
        <end position="654"/>
    </location>
</feature>
<feature type="binding site" evidence="1">
    <location>
        <position position="557"/>
    </location>
    <ligand>
        <name>[4Fe-4S] cluster</name>
        <dbReference type="ChEBI" id="CHEBI:49883"/>
    </ligand>
</feature>
<feature type="binding site" evidence="1">
    <location>
        <position position="560"/>
    </location>
    <ligand>
        <name>[4Fe-4S] cluster</name>
        <dbReference type="ChEBI" id="CHEBI:49883"/>
    </ligand>
</feature>
<feature type="binding site" evidence="1">
    <location>
        <position position="591"/>
    </location>
    <ligand>
        <name>[4Fe-4S] cluster</name>
        <dbReference type="ChEBI" id="CHEBI:49883"/>
    </ligand>
</feature>
<feature type="binding site" evidence="1">
    <location>
        <position position="598"/>
    </location>
    <ligand>
        <name>[4Fe-4S] cluster</name>
        <dbReference type="ChEBI" id="CHEBI:49883"/>
    </ligand>
</feature>
<dbReference type="EC" id="1.17.7.3" evidence="1"/>
<dbReference type="EMBL" id="BX908798">
    <property type="protein sequence ID" value="CAF23464.1"/>
    <property type="molecule type" value="Genomic_DNA"/>
</dbReference>
<dbReference type="RefSeq" id="WP_011175290.1">
    <property type="nucleotide sequence ID" value="NC_005861.2"/>
</dbReference>
<dbReference type="STRING" id="264201.pc0740"/>
<dbReference type="KEGG" id="pcu:PC_RS03560"/>
<dbReference type="eggNOG" id="COG0821">
    <property type="taxonomic scope" value="Bacteria"/>
</dbReference>
<dbReference type="HOGENOM" id="CLU_012689_0_0_0"/>
<dbReference type="OrthoDB" id="9803214at2"/>
<dbReference type="UniPathway" id="UPA00056">
    <property type="reaction ID" value="UER00096"/>
</dbReference>
<dbReference type="Proteomes" id="UP000000529">
    <property type="component" value="Chromosome"/>
</dbReference>
<dbReference type="GO" id="GO:0051539">
    <property type="term" value="F:4 iron, 4 sulfur cluster binding"/>
    <property type="evidence" value="ECO:0007669"/>
    <property type="project" value="UniProtKB-UniRule"/>
</dbReference>
<dbReference type="GO" id="GO:0046429">
    <property type="term" value="F:4-hydroxy-3-methylbut-2-en-1-yl diphosphate synthase activity (ferredoxin)"/>
    <property type="evidence" value="ECO:0007669"/>
    <property type="project" value="UniProtKB-UniRule"/>
</dbReference>
<dbReference type="GO" id="GO:0141197">
    <property type="term" value="F:4-hydroxy-3-methylbut-2-enyl-diphosphate synthase activity (flavodoxin)"/>
    <property type="evidence" value="ECO:0007669"/>
    <property type="project" value="UniProtKB-EC"/>
</dbReference>
<dbReference type="GO" id="GO:0005506">
    <property type="term" value="F:iron ion binding"/>
    <property type="evidence" value="ECO:0007669"/>
    <property type="project" value="InterPro"/>
</dbReference>
<dbReference type="GO" id="GO:0019288">
    <property type="term" value="P:isopentenyl diphosphate biosynthetic process, methylerythritol 4-phosphate pathway"/>
    <property type="evidence" value="ECO:0007669"/>
    <property type="project" value="UniProtKB-UniRule"/>
</dbReference>
<dbReference type="GO" id="GO:0016114">
    <property type="term" value="P:terpenoid biosynthetic process"/>
    <property type="evidence" value="ECO:0007669"/>
    <property type="project" value="InterPro"/>
</dbReference>
<dbReference type="FunFam" id="3.20.20.20:FF:000005">
    <property type="entry name" value="4-hydroxy-3-methylbut-2-en-1-yl diphosphate synthase (flavodoxin)"/>
    <property type="match status" value="1"/>
</dbReference>
<dbReference type="FunFam" id="3.30.413.10:FF:000006">
    <property type="entry name" value="4-hydroxy-3-methylbut-2-en-1-yl diphosphate synthase (flavodoxin)"/>
    <property type="match status" value="1"/>
</dbReference>
<dbReference type="Gene3D" id="3.20.20.20">
    <property type="entry name" value="Dihydropteroate synthase-like"/>
    <property type="match status" value="1"/>
</dbReference>
<dbReference type="Gene3D" id="3.30.413.10">
    <property type="entry name" value="Sulfite Reductase Hemoprotein, domain 1"/>
    <property type="match status" value="1"/>
</dbReference>
<dbReference type="HAMAP" id="MF_00159">
    <property type="entry name" value="IspG"/>
    <property type="match status" value="1"/>
</dbReference>
<dbReference type="InterPro" id="IPR011005">
    <property type="entry name" value="Dihydropteroate_synth-like_sf"/>
</dbReference>
<dbReference type="InterPro" id="IPR017178">
    <property type="entry name" value="IspG_atypical"/>
</dbReference>
<dbReference type="InterPro" id="IPR004588">
    <property type="entry name" value="IspG_bac-typ"/>
</dbReference>
<dbReference type="InterPro" id="IPR045854">
    <property type="entry name" value="NO2/SO3_Rdtase_4Fe4S_sf"/>
</dbReference>
<dbReference type="NCBIfam" id="TIGR00612">
    <property type="entry name" value="ispG_gcpE"/>
    <property type="match status" value="1"/>
</dbReference>
<dbReference type="PANTHER" id="PTHR30454">
    <property type="entry name" value="4-HYDROXY-3-METHYLBUT-2-EN-1-YL DIPHOSPHATE SYNTHASE"/>
    <property type="match status" value="1"/>
</dbReference>
<dbReference type="PANTHER" id="PTHR30454:SF0">
    <property type="entry name" value="4-HYDROXY-3-METHYLBUT-2-EN-1-YL DIPHOSPHATE SYNTHASE (FERREDOXIN), CHLOROPLASTIC"/>
    <property type="match status" value="1"/>
</dbReference>
<dbReference type="Pfam" id="PF04551">
    <property type="entry name" value="GcpE"/>
    <property type="match status" value="2"/>
</dbReference>
<dbReference type="PIRSF" id="PIRSF037336">
    <property type="entry name" value="IspG_like"/>
    <property type="match status" value="1"/>
</dbReference>
<dbReference type="SUPFAM" id="SSF56014">
    <property type="entry name" value="Nitrite and sulphite reductase 4Fe-4S domain-like"/>
    <property type="match status" value="1"/>
</dbReference>